<sequence>MPRYKLTIEYDGAPFCGWQLQPVLPSVQGALEAAALATCGEAVRVHGAGRTDAGVHALGQVAHLDIAKPFRADRLRDALNAHVRPYPVAVLSTEIVPDSFEARFSAIRRHYRYRIVNRRSNLALEIGKVWRVPKPLDTDAMHRAAQVLIGKHDFTTFRDTECQAASPEKTLDVLDVVRSGDCVDIITSARSYLHSQVRSMVGSLVWVGEGRWSADDLAAALAARRRSACGPVAPPDGLYLVKVDY</sequence>
<name>TRUA_RHOPS</name>
<reference key="1">
    <citation type="submission" date="2006-03" db="EMBL/GenBank/DDBJ databases">
        <title>Complete sequence of Rhodopseudomonas palustris BisB5.</title>
        <authorList>
            <consortium name="US DOE Joint Genome Institute"/>
            <person name="Copeland A."/>
            <person name="Lucas S."/>
            <person name="Lapidus A."/>
            <person name="Barry K."/>
            <person name="Detter J.C."/>
            <person name="Glavina del Rio T."/>
            <person name="Hammon N."/>
            <person name="Israni S."/>
            <person name="Dalin E."/>
            <person name="Tice H."/>
            <person name="Pitluck S."/>
            <person name="Chain P."/>
            <person name="Malfatti S."/>
            <person name="Shin M."/>
            <person name="Vergez L."/>
            <person name="Schmutz J."/>
            <person name="Larimer F."/>
            <person name="Land M."/>
            <person name="Hauser L."/>
            <person name="Pelletier D.A."/>
            <person name="Kyrpides N."/>
            <person name="Lykidis A."/>
            <person name="Oda Y."/>
            <person name="Harwood C.S."/>
            <person name="Richardson P."/>
        </authorList>
    </citation>
    <scope>NUCLEOTIDE SEQUENCE [LARGE SCALE GENOMIC DNA]</scope>
    <source>
        <strain>BisB5</strain>
    </source>
</reference>
<evidence type="ECO:0000255" key="1">
    <source>
        <dbReference type="HAMAP-Rule" id="MF_00171"/>
    </source>
</evidence>
<organism>
    <name type="scientific">Rhodopseudomonas palustris (strain BisB5)</name>
    <dbReference type="NCBI Taxonomy" id="316057"/>
    <lineage>
        <taxon>Bacteria</taxon>
        <taxon>Pseudomonadati</taxon>
        <taxon>Pseudomonadota</taxon>
        <taxon>Alphaproteobacteria</taxon>
        <taxon>Hyphomicrobiales</taxon>
        <taxon>Nitrobacteraceae</taxon>
        <taxon>Rhodopseudomonas</taxon>
    </lineage>
</organism>
<proteinExistence type="inferred from homology"/>
<gene>
    <name evidence="1" type="primary">truA</name>
    <name type="ordered locus">RPD_0079</name>
</gene>
<comment type="function">
    <text evidence="1">Formation of pseudouridine at positions 38, 39 and 40 in the anticodon stem and loop of transfer RNAs.</text>
</comment>
<comment type="catalytic activity">
    <reaction evidence="1">
        <text>uridine(38/39/40) in tRNA = pseudouridine(38/39/40) in tRNA</text>
        <dbReference type="Rhea" id="RHEA:22376"/>
        <dbReference type="Rhea" id="RHEA-COMP:10085"/>
        <dbReference type="Rhea" id="RHEA-COMP:10087"/>
        <dbReference type="ChEBI" id="CHEBI:65314"/>
        <dbReference type="ChEBI" id="CHEBI:65315"/>
        <dbReference type="EC" id="5.4.99.12"/>
    </reaction>
</comment>
<comment type="subunit">
    <text evidence="1">Homodimer.</text>
</comment>
<comment type="similarity">
    <text evidence="1">Belongs to the tRNA pseudouridine synthase TruA family.</text>
</comment>
<dbReference type="EC" id="5.4.99.12" evidence="1"/>
<dbReference type="EMBL" id="CP000283">
    <property type="protein sequence ID" value="ABE37319.1"/>
    <property type="molecule type" value="Genomic_DNA"/>
</dbReference>
<dbReference type="SMR" id="Q13F20"/>
<dbReference type="STRING" id="316057.RPD_0079"/>
<dbReference type="KEGG" id="rpd:RPD_0079"/>
<dbReference type="eggNOG" id="COG0101">
    <property type="taxonomic scope" value="Bacteria"/>
</dbReference>
<dbReference type="HOGENOM" id="CLU_014673_0_2_5"/>
<dbReference type="BioCyc" id="RPAL316057:RPD_RS00395-MONOMER"/>
<dbReference type="Proteomes" id="UP000001818">
    <property type="component" value="Chromosome"/>
</dbReference>
<dbReference type="GO" id="GO:0003723">
    <property type="term" value="F:RNA binding"/>
    <property type="evidence" value="ECO:0007669"/>
    <property type="project" value="InterPro"/>
</dbReference>
<dbReference type="GO" id="GO:0160147">
    <property type="term" value="F:tRNA pseudouridine(38-40) synthase activity"/>
    <property type="evidence" value="ECO:0007669"/>
    <property type="project" value="UniProtKB-EC"/>
</dbReference>
<dbReference type="GO" id="GO:0031119">
    <property type="term" value="P:tRNA pseudouridine synthesis"/>
    <property type="evidence" value="ECO:0007669"/>
    <property type="project" value="UniProtKB-UniRule"/>
</dbReference>
<dbReference type="CDD" id="cd02570">
    <property type="entry name" value="PseudoU_synth_EcTruA"/>
    <property type="match status" value="1"/>
</dbReference>
<dbReference type="FunFam" id="3.30.70.580:FF:000001">
    <property type="entry name" value="tRNA pseudouridine synthase A"/>
    <property type="match status" value="1"/>
</dbReference>
<dbReference type="Gene3D" id="3.30.70.660">
    <property type="entry name" value="Pseudouridine synthase I, catalytic domain, C-terminal subdomain"/>
    <property type="match status" value="1"/>
</dbReference>
<dbReference type="Gene3D" id="3.30.70.580">
    <property type="entry name" value="Pseudouridine synthase I, catalytic domain, N-terminal subdomain"/>
    <property type="match status" value="1"/>
</dbReference>
<dbReference type="HAMAP" id="MF_00171">
    <property type="entry name" value="TruA"/>
    <property type="match status" value="1"/>
</dbReference>
<dbReference type="InterPro" id="IPR020103">
    <property type="entry name" value="PsdUridine_synth_cat_dom_sf"/>
</dbReference>
<dbReference type="InterPro" id="IPR001406">
    <property type="entry name" value="PsdUridine_synth_TruA"/>
</dbReference>
<dbReference type="InterPro" id="IPR020097">
    <property type="entry name" value="PsdUridine_synth_TruA_a/b_dom"/>
</dbReference>
<dbReference type="InterPro" id="IPR020095">
    <property type="entry name" value="PsdUridine_synth_TruA_C"/>
</dbReference>
<dbReference type="InterPro" id="IPR020094">
    <property type="entry name" value="TruA/RsuA/RluB/E/F_N"/>
</dbReference>
<dbReference type="NCBIfam" id="TIGR00071">
    <property type="entry name" value="hisT_truA"/>
    <property type="match status" value="1"/>
</dbReference>
<dbReference type="PANTHER" id="PTHR11142">
    <property type="entry name" value="PSEUDOURIDYLATE SYNTHASE"/>
    <property type="match status" value="1"/>
</dbReference>
<dbReference type="PANTHER" id="PTHR11142:SF0">
    <property type="entry name" value="TRNA PSEUDOURIDINE SYNTHASE-LIKE 1"/>
    <property type="match status" value="1"/>
</dbReference>
<dbReference type="Pfam" id="PF01416">
    <property type="entry name" value="PseudoU_synth_1"/>
    <property type="match status" value="2"/>
</dbReference>
<dbReference type="PIRSF" id="PIRSF001430">
    <property type="entry name" value="tRNA_psdUrid_synth"/>
    <property type="match status" value="1"/>
</dbReference>
<dbReference type="SUPFAM" id="SSF55120">
    <property type="entry name" value="Pseudouridine synthase"/>
    <property type="match status" value="1"/>
</dbReference>
<protein>
    <recommendedName>
        <fullName evidence="1">tRNA pseudouridine synthase A</fullName>
        <ecNumber evidence="1">5.4.99.12</ecNumber>
    </recommendedName>
    <alternativeName>
        <fullName evidence="1">tRNA pseudouridine(38-40) synthase</fullName>
    </alternativeName>
    <alternativeName>
        <fullName evidence="1">tRNA pseudouridylate synthase I</fullName>
    </alternativeName>
    <alternativeName>
        <fullName evidence="1">tRNA-uridine isomerase I</fullName>
    </alternativeName>
</protein>
<keyword id="KW-0413">Isomerase</keyword>
<keyword id="KW-0819">tRNA processing</keyword>
<accession>Q13F20</accession>
<feature type="chain" id="PRO_1000097776" description="tRNA pseudouridine synthase A">
    <location>
        <begin position="1"/>
        <end position="245"/>
    </location>
</feature>
<feature type="active site" description="Nucleophile" evidence="1">
    <location>
        <position position="52"/>
    </location>
</feature>
<feature type="binding site" evidence="1">
    <location>
        <position position="111"/>
    </location>
    <ligand>
        <name>substrate</name>
    </ligand>
</feature>